<gene>
    <name evidence="9" type="primary">TRAV19</name>
</gene>
<reference key="1">
    <citation type="journal article" date="2003" name="Nature">
        <title>The DNA sequence and analysis of human chromosome 14.</title>
        <authorList>
            <person name="Heilig R."/>
            <person name="Eckenberg R."/>
            <person name="Petit J.-L."/>
            <person name="Fonknechten N."/>
            <person name="Da Silva C."/>
            <person name="Cattolico L."/>
            <person name="Levy M."/>
            <person name="Barbe V."/>
            <person name="De Berardinis V."/>
            <person name="Ureta-Vidal A."/>
            <person name="Pelletier E."/>
            <person name="Vico V."/>
            <person name="Anthouard V."/>
            <person name="Rowen L."/>
            <person name="Madan A."/>
            <person name="Qin S."/>
            <person name="Sun H."/>
            <person name="Du H."/>
            <person name="Pepin K."/>
            <person name="Artiguenave F."/>
            <person name="Robert C."/>
            <person name="Cruaud C."/>
            <person name="Bruels T."/>
            <person name="Jaillon O."/>
            <person name="Friedlander L."/>
            <person name="Samson G."/>
            <person name="Brottier P."/>
            <person name="Cure S."/>
            <person name="Segurens B."/>
            <person name="Aniere F."/>
            <person name="Samain S."/>
            <person name="Crespeau H."/>
            <person name="Abbasi N."/>
            <person name="Aiach N."/>
            <person name="Boscus D."/>
            <person name="Dickhoff R."/>
            <person name="Dors M."/>
            <person name="Dubois I."/>
            <person name="Friedman C."/>
            <person name="Gouyvenoux M."/>
            <person name="James R."/>
            <person name="Madan A."/>
            <person name="Mairey-Estrada B."/>
            <person name="Mangenot S."/>
            <person name="Martins N."/>
            <person name="Menard M."/>
            <person name="Oztas S."/>
            <person name="Ratcliffe A."/>
            <person name="Shaffer T."/>
            <person name="Trask B."/>
            <person name="Vacherie B."/>
            <person name="Bellemere C."/>
            <person name="Belser C."/>
            <person name="Besnard-Gonnet M."/>
            <person name="Bartol-Mavel D."/>
            <person name="Boutard M."/>
            <person name="Briez-Silla S."/>
            <person name="Combette S."/>
            <person name="Dufosse-Laurent V."/>
            <person name="Ferron C."/>
            <person name="Lechaplais C."/>
            <person name="Louesse C."/>
            <person name="Muselet D."/>
            <person name="Magdelenat G."/>
            <person name="Pateau E."/>
            <person name="Petit E."/>
            <person name="Sirvain-Trukniewicz P."/>
            <person name="Trybou A."/>
            <person name="Vega-Czarny N."/>
            <person name="Bataille E."/>
            <person name="Bluet E."/>
            <person name="Bordelais I."/>
            <person name="Dubois M."/>
            <person name="Dumont C."/>
            <person name="Guerin T."/>
            <person name="Haffray S."/>
            <person name="Hammadi R."/>
            <person name="Muanga J."/>
            <person name="Pellouin V."/>
            <person name="Robert D."/>
            <person name="Wunderle E."/>
            <person name="Gauguet G."/>
            <person name="Roy A."/>
            <person name="Sainte-Marthe L."/>
            <person name="Verdier J."/>
            <person name="Verdier-Discala C."/>
            <person name="Hillier L.W."/>
            <person name="Fulton L."/>
            <person name="McPherson J."/>
            <person name="Matsuda F."/>
            <person name="Wilson R."/>
            <person name="Scarpelli C."/>
            <person name="Gyapay G."/>
            <person name="Wincker P."/>
            <person name="Saurin W."/>
            <person name="Quetier F."/>
            <person name="Waterston R."/>
            <person name="Hood L."/>
            <person name="Weissenbach J."/>
        </authorList>
    </citation>
    <scope>NUCLEOTIDE SEQUENCE [LARGE SCALE GENOMIC DNA] (IMGT ALLELE TRAV19*01)</scope>
</reference>
<reference key="2">
    <citation type="journal article" date="1984" name="Nature">
        <title>Primary structure of human T-cell receptor alpha-chain.</title>
        <authorList>
            <person name="Sim G.K."/>
            <person name="Yague J."/>
            <person name="Nelson J."/>
            <person name="Marrack P."/>
            <person name="Palmer E."/>
            <person name="Augustin A."/>
            <person name="Kappler J."/>
        </authorList>
    </citation>
    <scope>NUCLEOTIDE SEQUENCE [MRNA] OF 2-116</scope>
</reference>
<reference key="3">
    <citation type="book" date="2001" name="The T Cell Receptor FactsBook.">
        <title>The T Cell Receptor FactsBook.</title>
        <editorList>
            <person name="Lefranc M.P."/>
            <person name="Lefranc G."/>
        </editorList>
        <authorList>
            <person name="Lefranc M.P."/>
            <person name="Lefranc G."/>
        </authorList>
    </citation>
    <scope>NOMENCLATURE</scope>
</reference>
<reference key="4">
    <citation type="journal article" date="2004" name="Nat. Rev. Immunol.">
        <title>The many important facets of T-cell repertoire diversity.</title>
        <authorList>
            <person name="Nikolich-Zugich J."/>
            <person name="Slifka M.K."/>
            <person name="Messaoudi I."/>
        </authorList>
    </citation>
    <scope>REVIEW ON T CELL REPERTOIRE DIVERSITY</scope>
</reference>
<reference key="5">
    <citation type="journal article" date="2010" name="Cold Spring Harb. Perspect. Biol.">
        <title>Structural biology of the T-cell receptor: insights into receptor assembly, ligand recognition, and initiation of signaling.</title>
        <authorList>
            <person name="Wucherpfennig K.W."/>
            <person name="Gagnon E."/>
            <person name="Call M.J."/>
            <person name="Huseby E.S."/>
            <person name="Call M.E."/>
        </authorList>
    </citation>
    <scope>REVIEW ON T CELL RECEPTOR-CD3 COMPLEX ASSEMBLY</scope>
    <scope>SUBCELLULAR LOCATION</scope>
</reference>
<reference key="6">
    <citation type="journal article" date="2013" name="Nat. Rev. Immunol.">
        <title>T cell receptor signalling networks: branched, diversified and bounded.</title>
        <authorList>
            <person name="Brownlie R.J."/>
            <person name="Zamoyska R."/>
        </authorList>
    </citation>
    <scope>REVIEW ON T CELL RECEPTOR SIGNALING</scope>
</reference>
<reference key="7">
    <citation type="journal article" date="2014" name="Front. Immunol.">
        <title>Immunoglobulin and T Cell Receptor Genes: IMGT((R)) and the Birth and Rise of Immunoinformatics.</title>
        <authorList>
            <person name="Lefranc M.P."/>
        </authorList>
    </citation>
    <scope>NOMENCLATURE</scope>
</reference>
<reference key="8">
    <citation type="journal article" date="2015" name="Annu. Rev. Immunol.">
        <title>T cell antigen receptor recognition of antigen-presenting molecules.</title>
        <authorList>
            <person name="Rossjohn J."/>
            <person name="Gras S."/>
            <person name="Miles J.J."/>
            <person name="Turner S.J."/>
            <person name="Godfrey D.I."/>
            <person name="McCluskey J."/>
        </authorList>
    </citation>
    <scope>REVIEW ON FUNCTION</scope>
</reference>
<name>TVA19_HUMAN</name>
<organism>
    <name type="scientific">Homo sapiens</name>
    <name type="common">Human</name>
    <dbReference type="NCBI Taxonomy" id="9606"/>
    <lineage>
        <taxon>Eukaryota</taxon>
        <taxon>Metazoa</taxon>
        <taxon>Chordata</taxon>
        <taxon>Craniata</taxon>
        <taxon>Vertebrata</taxon>
        <taxon>Euteleostomi</taxon>
        <taxon>Mammalia</taxon>
        <taxon>Eutheria</taxon>
        <taxon>Euarchontoglires</taxon>
        <taxon>Primates</taxon>
        <taxon>Haplorrhini</taxon>
        <taxon>Catarrhini</taxon>
        <taxon>Hominidae</taxon>
        <taxon>Homo</taxon>
    </lineage>
</organism>
<dbReference type="EMBL" id="AC245505">
    <property type="status" value="NOT_ANNOTATED_CDS"/>
    <property type="molecule type" value="Genomic_DNA"/>
</dbReference>
<dbReference type="PIR" id="A02010">
    <property type="entry name" value="RWHUAA"/>
</dbReference>
<dbReference type="SMR" id="A0A0A6YYK7"/>
<dbReference type="FunCoup" id="A0A0A6YYK7">
    <property type="interactions" value="378"/>
</dbReference>
<dbReference type="IMGT_GENE-DB" id="TRAV19"/>
<dbReference type="GlyCosmos" id="A0A0A6YYK7">
    <property type="glycosylation" value="1 site, No reported glycans"/>
</dbReference>
<dbReference type="GlyGen" id="A0A0A6YYK7">
    <property type="glycosylation" value="1 site"/>
</dbReference>
<dbReference type="BioMuta" id="-"/>
<dbReference type="BioMuta" id="TRAV19"/>
<dbReference type="Ensembl" id="ENST00000390447.3">
    <property type="protein sequence ID" value="ENSP00000452148.1"/>
    <property type="gene ID" value="ENSG00000211799.3"/>
</dbReference>
<dbReference type="AGR" id="HGNC:12115"/>
<dbReference type="GeneCards" id="TRAV19"/>
<dbReference type="HGNC" id="HGNC:12115">
    <property type="gene designation" value="TRAV19"/>
</dbReference>
<dbReference type="HPA" id="ENSG00000211799">
    <property type="expression patterns" value="Tissue enriched (lymphoid)"/>
</dbReference>
<dbReference type="neXtProt" id="NX_A0A0A6YYK7"/>
<dbReference type="VEuPathDB" id="HostDB:ENSG00000211799"/>
<dbReference type="GeneTree" id="ENSGT00940000163052"/>
<dbReference type="HOGENOM" id="CLU_077975_8_1_1"/>
<dbReference type="InParanoid" id="A0A0A6YYK7"/>
<dbReference type="OMA" id="SAQVVWQ"/>
<dbReference type="OrthoDB" id="8947657at2759"/>
<dbReference type="PAN-GO" id="A0A0A6YYK7">
    <property type="GO annotations" value="3 GO annotations based on evolutionary models"/>
</dbReference>
<dbReference type="PathwayCommons" id="A0A0A6YYK7"/>
<dbReference type="Reactome" id="R-HSA-198933">
    <property type="pathway name" value="Immunoregulatory interactions between a Lymphoid and a non-Lymphoid cell"/>
</dbReference>
<dbReference type="Reactome" id="R-HSA-202424">
    <property type="pathway name" value="Downstream TCR signaling"/>
</dbReference>
<dbReference type="Reactome" id="R-HSA-202427">
    <property type="pathway name" value="Phosphorylation of CD3 and TCR zeta chains"/>
</dbReference>
<dbReference type="Reactome" id="R-HSA-202430">
    <property type="pathway name" value="Translocation of ZAP-70 to Immunological synapse"/>
</dbReference>
<dbReference type="Reactome" id="R-HSA-202433">
    <property type="pathway name" value="Generation of second messenger molecules"/>
</dbReference>
<dbReference type="Reactome" id="R-HSA-389948">
    <property type="pathway name" value="Co-inhibition by PD-1"/>
</dbReference>
<dbReference type="ChiTaRS" id="TRAV19">
    <property type="organism name" value="human"/>
</dbReference>
<dbReference type="Pharos" id="A0A0A6YYK7">
    <property type="development level" value="Tdark"/>
</dbReference>
<dbReference type="PRO" id="PR:A0A0A6YYK7"/>
<dbReference type="Proteomes" id="UP000005640">
    <property type="component" value="Chromosome 14"/>
</dbReference>
<dbReference type="RNAct" id="A0A0A6YYK7">
    <property type="molecule type" value="protein"/>
</dbReference>
<dbReference type="Bgee" id="ENSG00000211799">
    <property type="expression patterns" value="Expressed in lymph node and 80 other cell types or tissues"/>
</dbReference>
<dbReference type="GO" id="GO:0019814">
    <property type="term" value="C:immunoglobulin complex"/>
    <property type="evidence" value="ECO:0000318"/>
    <property type="project" value="GO_Central"/>
</dbReference>
<dbReference type="GO" id="GO:0005886">
    <property type="term" value="C:plasma membrane"/>
    <property type="evidence" value="ECO:0000304"/>
    <property type="project" value="Reactome"/>
</dbReference>
<dbReference type="GO" id="GO:0042101">
    <property type="term" value="C:T cell receptor complex"/>
    <property type="evidence" value="ECO:0007669"/>
    <property type="project" value="UniProtKB-KW"/>
</dbReference>
<dbReference type="GO" id="GO:0042287">
    <property type="term" value="F:MHC protein binding"/>
    <property type="evidence" value="ECO:0000303"/>
    <property type="project" value="UniProtKB"/>
</dbReference>
<dbReference type="GO" id="GO:0042605">
    <property type="term" value="F:peptide antigen binding"/>
    <property type="evidence" value="ECO:0000303"/>
    <property type="project" value="UniProtKB"/>
</dbReference>
<dbReference type="GO" id="GO:0002250">
    <property type="term" value="P:adaptive immune response"/>
    <property type="evidence" value="ECO:0007669"/>
    <property type="project" value="UniProtKB-KW"/>
</dbReference>
<dbReference type="GO" id="GO:0006955">
    <property type="term" value="P:immune response"/>
    <property type="evidence" value="ECO:0000318"/>
    <property type="project" value="GO_Central"/>
</dbReference>
<dbReference type="FunFam" id="2.60.40.10:FF:000878">
    <property type="entry name" value="T cell receptor alpha variable 38-1"/>
    <property type="match status" value="1"/>
</dbReference>
<dbReference type="Gene3D" id="2.60.40.10">
    <property type="entry name" value="Immunoglobulins"/>
    <property type="match status" value="1"/>
</dbReference>
<dbReference type="InterPro" id="IPR007110">
    <property type="entry name" value="Ig-like_dom"/>
</dbReference>
<dbReference type="InterPro" id="IPR036179">
    <property type="entry name" value="Ig-like_dom_sf"/>
</dbReference>
<dbReference type="InterPro" id="IPR013783">
    <property type="entry name" value="Ig-like_fold"/>
</dbReference>
<dbReference type="InterPro" id="IPR013106">
    <property type="entry name" value="Ig_V-set"/>
</dbReference>
<dbReference type="InterPro" id="IPR051287">
    <property type="entry name" value="TCR_variable_region"/>
</dbReference>
<dbReference type="PANTHER" id="PTHR19367:SF45">
    <property type="entry name" value="IG-LIKE DOMAIN-CONTAINING PROTEIN"/>
    <property type="match status" value="1"/>
</dbReference>
<dbReference type="PANTHER" id="PTHR19367">
    <property type="entry name" value="T-CELL RECEPTOR ALPHA CHAIN V REGION"/>
    <property type="match status" value="1"/>
</dbReference>
<dbReference type="Pfam" id="PF07686">
    <property type="entry name" value="V-set"/>
    <property type="match status" value="1"/>
</dbReference>
<dbReference type="SMART" id="SM00406">
    <property type="entry name" value="IGv"/>
    <property type="match status" value="1"/>
</dbReference>
<dbReference type="SUPFAM" id="SSF48726">
    <property type="entry name" value="Immunoglobulin"/>
    <property type="match status" value="1"/>
</dbReference>
<dbReference type="PROSITE" id="PS50835">
    <property type="entry name" value="IG_LIKE"/>
    <property type="match status" value="1"/>
</dbReference>
<accession>A0A0A6YYK7</accession>
<accession>P04436</accession>
<proteinExistence type="evidence at protein level"/>
<keyword id="KW-1064">Adaptive immunity</keyword>
<keyword id="KW-1003">Cell membrane</keyword>
<keyword id="KW-1015">Disulfide bond</keyword>
<keyword id="KW-0325">Glycoprotein</keyword>
<keyword id="KW-0391">Immunity</keyword>
<keyword id="KW-0393">Immunoglobulin domain</keyword>
<keyword id="KW-0472">Membrane</keyword>
<keyword id="KW-1267">Proteomics identification</keyword>
<keyword id="KW-0675">Receptor</keyword>
<keyword id="KW-1185">Reference proteome</keyword>
<keyword id="KW-0732">Signal</keyword>
<keyword id="KW-1279">T cell receptor</keyword>
<comment type="function">
    <text evidence="3 5 6 7">V region of the variable domain of T cell receptor (TR) alpha chain that participates in the antigen recognition (PubMed:24600447). Alpha-beta T cell receptors are antigen specific receptors which are essential to the immune response and are present on the cell surface of T lymphocytes. Recognize peptide-major histocompatibility (MH) (pMH) complexes that are displayed by antigen presenting cells (APC), a prerequisite for efficient T cell adaptive immunity against pathogens (PubMed:25493333). Binding of alpha-beta TR to pMH complex initiates TR-CD3 clustering on the cell surface and intracellular activation of LCK that phosphorylates the ITAM motifs of CD3G, CD3D, CD3E and CD247 enabling the recruitment of ZAP70. In turn ZAP70 phosphorylates LAT, which recruits numerous signaling molecules to form the LAT signalosome. The LAT signalosome propagates signal branching to three major signaling pathways, the calcium, the mitogen-activated protein kinase (MAPK) kinase and the nuclear factor NF-kappa-B (NF-kB) pathways, leading to the mobilization of transcription factors that are critical for gene expression and essential for T cell growth and differentiation (PubMed:23524462). The T cell repertoire is generated in the thymus, by V-(D)-J rearrangement. This repertoire is then shaped by intrathymic selection events to generate a peripheral T cell pool of self-MH restricted, non-autoaggressive T cells. Post-thymic interaction of alpha-beta TR with the pMH complexes shapes TR structural and functional avidity (PubMed:15040585).</text>
</comment>
<comment type="subunit">
    <text evidence="4">Alpha-beta TR is a heterodimer composed of an alpha and beta chain; disulfide-linked. The alpha-beta TR is associated with the transmembrane signaling CD3 coreceptor proteins to form the TR-CD3 (TcR or TCR). The assembly of alpha-beta TR heterodimers with CD3 occurs in the endoplasmic reticulum where a single alpha-beta TR heterodimer associates with one CD3D-CD3E heterodimer, one CD3G-CD3E heterodimer and one CD247 homodimer forming a stable octameric structure. CD3D-CD3E and CD3G-CD3E heterodimers preferentially associate with TR alpha and TR beta chains, respectively. The association of the CD247 homodimer is the last step of TcR assembly in the endoplasmic reticulum and is required for transport to the cell surface.</text>
</comment>
<comment type="subcellular location">
    <subcellularLocation>
        <location evidence="4">Cell membrane</location>
    </subcellularLocation>
</comment>
<comment type="polymorphism">
    <text evidence="10">There are several alleles. The sequence shown is that of IMGT allele TRAV19*01.</text>
</comment>
<sequence>MLTASLLRAVIASICVVSSMAQKVTQAQTEISVVEKEDVTLDCVYETRDTTYYLFWYKQPPSGELVFLIRRNSFDEQNEISGRYSWNFQKSTSSFNFTITASQVVDSAVYFCALSE</sequence>
<feature type="signal peptide" evidence="1">
    <location>
        <begin position="1"/>
        <end position="21"/>
    </location>
</feature>
<feature type="chain" id="PRO_5008203095" description="T cell receptor alpha variable 19" evidence="1">
    <location>
        <begin position="22"/>
        <end position="116"/>
    </location>
</feature>
<feature type="domain" description="Ig-like" evidence="2">
    <location>
        <begin position="22"/>
        <end position="116" status="greater than"/>
    </location>
</feature>
<feature type="glycosylation site" description="N-linked (GlcNAc...) asparagine" evidence="1">
    <location>
        <position position="96"/>
    </location>
</feature>
<feature type="disulfide bond" evidence="2">
    <location>
        <begin position="43"/>
        <end position="112"/>
    </location>
</feature>
<feature type="sequence conflict" description="In Ref. 2." evidence="10" ref="2">
    <original>LT</original>
    <variation>IF</variation>
    <location>
        <begin position="2"/>
        <end position="3"/>
    </location>
</feature>
<feature type="sequence conflict" description="In Ref. 2." evidence="10" ref="2">
    <original>SE</original>
    <variation>DS</variation>
    <location>
        <begin position="115"/>
        <end position="116"/>
    </location>
</feature>
<feature type="non-terminal residue">
    <location>
        <position position="116"/>
    </location>
</feature>
<protein>
    <recommendedName>
        <fullName evidence="9">T cell receptor alpha variable 19</fullName>
    </recommendedName>
    <alternativeName>
        <fullName evidence="8">T-cell receptor alpha chain V region HPB-MLT</fullName>
    </alternativeName>
</protein>
<evidence type="ECO:0000255" key="1"/>
<evidence type="ECO:0000255" key="2">
    <source>
        <dbReference type="PROSITE-ProRule" id="PRU00114"/>
    </source>
</evidence>
<evidence type="ECO:0000303" key="3">
    <source>
    </source>
</evidence>
<evidence type="ECO:0000303" key="4">
    <source>
    </source>
</evidence>
<evidence type="ECO:0000303" key="5">
    <source>
    </source>
</evidence>
<evidence type="ECO:0000303" key="6">
    <source>
    </source>
</evidence>
<evidence type="ECO:0000303" key="7">
    <source>
    </source>
</evidence>
<evidence type="ECO:0000303" key="8">
    <source>
    </source>
</evidence>
<evidence type="ECO:0000303" key="9">
    <source ref="3"/>
</evidence>
<evidence type="ECO:0000305" key="10"/>